<accession>Q9KIV2</accession>
<reference key="1">
    <citation type="journal article" date="2000" name="Infect. Immun.">
        <title>Detection of phase variation in expression of proteins involved in hemoglobin and hemoglobin-haptoglobin binding by nontypeable Haemophilus influenzae.</title>
        <authorList>
            <person name="Cope L.D."/>
            <person name="Hrkal Z."/>
            <person name="Hansen E.J."/>
        </authorList>
    </citation>
    <scope>NUCLEOTIDE SEQUENCE [GENOMIC DNA]</scope>
    <source>
        <strain>NTHi N182</strain>
    </source>
</reference>
<name>HGBA_HAEIF</name>
<dbReference type="EMBL" id="AF221059">
    <property type="protein sequence ID" value="AAF80176.1"/>
    <property type="molecule type" value="Genomic_DNA"/>
</dbReference>
<dbReference type="SMR" id="Q9KIV2"/>
<dbReference type="GO" id="GO:0009279">
    <property type="term" value="C:cell outer membrane"/>
    <property type="evidence" value="ECO:0007669"/>
    <property type="project" value="UniProtKB-SubCell"/>
</dbReference>
<dbReference type="GO" id="GO:0015344">
    <property type="term" value="F:siderophore uptake transmembrane transporter activity"/>
    <property type="evidence" value="ECO:0007669"/>
    <property type="project" value="TreeGrafter"/>
</dbReference>
<dbReference type="Gene3D" id="2.40.170.20">
    <property type="entry name" value="TonB-dependent receptor, beta-barrel domain"/>
    <property type="match status" value="2"/>
</dbReference>
<dbReference type="Gene3D" id="2.170.130.10">
    <property type="entry name" value="TonB-dependent receptor, plug domain"/>
    <property type="match status" value="1"/>
</dbReference>
<dbReference type="InterPro" id="IPR012910">
    <property type="entry name" value="Plug_dom"/>
</dbReference>
<dbReference type="InterPro" id="IPR037066">
    <property type="entry name" value="Plug_dom_sf"/>
</dbReference>
<dbReference type="InterPro" id="IPR006970">
    <property type="entry name" value="PT"/>
</dbReference>
<dbReference type="InterPro" id="IPR039426">
    <property type="entry name" value="TonB-dep_rcpt-like"/>
</dbReference>
<dbReference type="InterPro" id="IPR000531">
    <property type="entry name" value="TonB-dep_rcpt_b-brl"/>
</dbReference>
<dbReference type="InterPro" id="IPR010949">
    <property type="entry name" value="TonB_Hb/transfer/lactofer_rcpt"/>
</dbReference>
<dbReference type="InterPro" id="IPR036942">
    <property type="entry name" value="TonB_rcpt_b-brl_sf"/>
</dbReference>
<dbReference type="InterPro" id="IPR010917">
    <property type="entry name" value="TonB_rcpt_CS"/>
</dbReference>
<dbReference type="NCBIfam" id="TIGR01786">
    <property type="entry name" value="TonB-hemlactrns"/>
    <property type="match status" value="1"/>
</dbReference>
<dbReference type="PANTHER" id="PTHR30069:SF29">
    <property type="entry name" value="HEMOGLOBIN AND HEMOGLOBIN-HAPTOGLOBIN-BINDING PROTEIN 1-RELATED"/>
    <property type="match status" value="1"/>
</dbReference>
<dbReference type="PANTHER" id="PTHR30069">
    <property type="entry name" value="TONB-DEPENDENT OUTER MEMBRANE RECEPTOR"/>
    <property type="match status" value="1"/>
</dbReference>
<dbReference type="Pfam" id="PF07715">
    <property type="entry name" value="Plug"/>
    <property type="match status" value="1"/>
</dbReference>
<dbReference type="Pfam" id="PF04886">
    <property type="entry name" value="PT"/>
    <property type="match status" value="1"/>
</dbReference>
<dbReference type="Pfam" id="PF00593">
    <property type="entry name" value="TonB_dep_Rec_b-barrel"/>
    <property type="match status" value="1"/>
</dbReference>
<dbReference type="SUPFAM" id="SSF56935">
    <property type="entry name" value="Porins"/>
    <property type="match status" value="1"/>
</dbReference>
<dbReference type="PROSITE" id="PS01156">
    <property type="entry name" value="TONB_DEPENDENT_REC_2"/>
    <property type="match status" value="1"/>
</dbReference>
<dbReference type="PROSITE" id="PS52016">
    <property type="entry name" value="TONB_DEPENDENT_REC_3"/>
    <property type="match status" value="1"/>
</dbReference>
<proteinExistence type="inferred from homology"/>
<organism>
    <name type="scientific">Haemophilus influenzae</name>
    <dbReference type="NCBI Taxonomy" id="727"/>
    <lineage>
        <taxon>Bacteria</taxon>
        <taxon>Pseudomonadati</taxon>
        <taxon>Pseudomonadota</taxon>
        <taxon>Gammaproteobacteria</taxon>
        <taxon>Pasteurellales</taxon>
        <taxon>Pasteurellaceae</taxon>
        <taxon>Haemophilus</taxon>
    </lineage>
</organism>
<protein>
    <recommendedName>
        <fullName>Hemoglobin-binding protein A</fullName>
    </recommendedName>
</protein>
<feature type="signal peptide" evidence="1">
    <location>
        <begin position="1"/>
        <end position="24"/>
    </location>
</feature>
<feature type="chain" id="PRO_0000034781" description="Hemoglobin-binding protein A">
    <location>
        <begin position="25"/>
        <end position="1013"/>
    </location>
</feature>
<feature type="repeat" description="1">
    <location>
        <begin position="26"/>
        <end position="29"/>
    </location>
</feature>
<feature type="repeat" description="2">
    <location>
        <begin position="30"/>
        <end position="33"/>
    </location>
</feature>
<feature type="repeat" description="3">
    <location>
        <begin position="34"/>
        <end position="37"/>
    </location>
</feature>
<feature type="repeat" description="4">
    <location>
        <begin position="38"/>
        <end position="41"/>
    </location>
</feature>
<feature type="repeat" description="5">
    <location>
        <begin position="42"/>
        <end position="45"/>
    </location>
</feature>
<feature type="repeat" description="6">
    <location>
        <begin position="46"/>
        <end position="49"/>
    </location>
</feature>
<feature type="repeat" description="7">
    <location>
        <begin position="50"/>
        <end position="53"/>
    </location>
</feature>
<feature type="repeat" description="8">
    <location>
        <begin position="54"/>
        <end position="57"/>
    </location>
</feature>
<feature type="domain" description="TBDR plug" evidence="2">
    <location>
        <begin position="78"/>
        <end position="205"/>
    </location>
</feature>
<feature type="domain" description="TBDR beta-barrel" evidence="2">
    <location>
        <begin position="213"/>
        <end position="1013"/>
    </location>
</feature>
<feature type="region of interest" description="Disordered" evidence="3">
    <location>
        <begin position="26"/>
        <end position="61"/>
    </location>
</feature>
<feature type="region of interest" description="8 X 4 AA tandem repeats of Q-P-T-N">
    <location>
        <begin position="26"/>
        <end position="57"/>
    </location>
</feature>
<feature type="short sequence motif" description="TonB box">
    <location>
        <begin position="67"/>
        <end position="74"/>
    </location>
</feature>
<feature type="short sequence motif" description="TonB C-terminal box">
    <location>
        <begin position="996"/>
        <end position="1013"/>
    </location>
</feature>
<feature type="compositionally biased region" description="Low complexity" evidence="3">
    <location>
        <begin position="26"/>
        <end position="58"/>
    </location>
</feature>
<keyword id="KW-0998">Cell outer membrane</keyword>
<keyword id="KW-0472">Membrane</keyword>
<keyword id="KW-0675">Receptor</keyword>
<keyword id="KW-0677">Repeat</keyword>
<keyword id="KW-0732">Signal</keyword>
<keyword id="KW-0798">TonB box</keyword>
<keyword id="KW-0812">Transmembrane</keyword>
<keyword id="KW-1134">Transmembrane beta strand</keyword>
<keyword id="KW-0813">Transport</keyword>
<gene>
    <name type="primary">hgbA</name>
</gene>
<sequence>MTNFKFSLLACSIAFALNASTAYAAQPTNQPTNQPTNQPTNQPTNQPTNQPTNQPTNQDSNLSEQLEQINVSGSTENSDSKTPPKIAETVKTAKTLEREQANNIKDIVKYETGVTVVEAGRFGQSGFAIRGVDENRVAINIDGLRQAETLSSQGFKELFEGYGNFNNTRNGAEIETLKEVNITKGANSIKSGSGSLGGSVIYKTKDARDYLLNKDYYVSYKKGYATENNQSFNTLTLAGRYKKFDVLVVTTSRNGHELENYGYKNYNDKIQGKRREKADPYKIEQDSTLLKLSFNPTENHRFTLAADLYEHRSRGQDLSYTLKYLKTLPDLPEVDSRHTNDKTKRHNISFSYENFSQTPFWDTLKITFSKQKIKTRARTDEYCDAGVRYCEGTANPAGLKLKNGEITRRDGTPLQFKEINNTTTPNSNSNKDKTYDFSKLIDTNGKEIESGITRSNDTFWYDCSIFDCENPGKMKVAEGKTYYRYDGTWKNNVQLEKKVLNGKEFARINNGTRGKTFPILPSSLGYLERLWQERDLDTNTQQLNLDLTKDFKTWRVEHNLQYGSSYNTTMKRMVNRAGYDATDVQWWAKRTLGTRFDFLKNEEIVETCATTFGWNAFLCPRVDPEFSYLLPIKTKEKSVYLFDNVVITDYLSFDLGYRYDNIHYQPKYKHGVTPKLPDDIVKELFIPLKSGQNNNDAEVKKNVQENIDYIAKQNKKYKAHSYSFVSTIDPTSFLRLQLKYSKGFRAPTSDEMYFTFKHPDFTILPNTHLKPEIAKTKEIAFTLHHDDWGFISTSLFKTNYRDFIDLVYKGEREFEVGNPNNRGKISFDTFQNINRDSAVVKGIEINSKVFLGKMAKFMDGFNLSYKYTYQKGRMDGNIPMNAIQPKTMVYGLGYDHPSQKFGFNFYTTHVASKNPEDTYDIYAKDKNQTNTSIKWRSKSYTILDLIGYVQPIKNLTIRAGVYNLTNRKYITWDSARSIRSFGTSNVIDQKTGQGINRFYAPGRNYKMSVQFEF</sequence>
<comment type="function">
    <text>Acts as a receptor for hemoglobin of the human host and is required for heme uptake.</text>
</comment>
<comment type="subcellular location">
    <subcellularLocation>
        <location evidence="2">Cell outer membrane</location>
        <topology evidence="2">Multi-pass membrane protein</topology>
    </subcellularLocation>
</comment>
<comment type="miscellaneous">
    <text>This protein is subject to phase-variable expression associated with alteration in the length of the CCAA repeat region. This mechanism is called slipped-strand mispairing. Addition or loss of CCAA repeat units would change the reading frame and result in introduction of stop codons downstream of the repeat region. This may be a mechanism of regulation and a way to avoid the immunological response of the host.</text>
</comment>
<comment type="similarity">
    <text evidence="4">Belongs to the TonB-dependent receptor family. Hemoglobin/haptoglobin binding protein subfamily.</text>
</comment>
<evidence type="ECO:0000255" key="1"/>
<evidence type="ECO:0000255" key="2">
    <source>
        <dbReference type="PROSITE-ProRule" id="PRU01360"/>
    </source>
</evidence>
<evidence type="ECO:0000256" key="3">
    <source>
        <dbReference type="SAM" id="MobiDB-lite"/>
    </source>
</evidence>
<evidence type="ECO:0000305" key="4"/>